<gene>
    <name evidence="1" type="primary">mntP</name>
    <name type="ordered locus">BALH_4823</name>
</gene>
<protein>
    <recommendedName>
        <fullName evidence="1">Putative manganese efflux pump MntP</fullName>
    </recommendedName>
</protein>
<comment type="function">
    <text evidence="1">Probably functions as a manganese efflux pump.</text>
</comment>
<comment type="subcellular location">
    <subcellularLocation>
        <location evidence="1">Cell membrane</location>
        <topology evidence="1">Multi-pass membrane protein</topology>
    </subcellularLocation>
</comment>
<comment type="similarity">
    <text evidence="1">Belongs to the MntP (TC 9.B.29) family.</text>
</comment>
<keyword id="KW-1003">Cell membrane</keyword>
<keyword id="KW-0406">Ion transport</keyword>
<keyword id="KW-0464">Manganese</keyword>
<keyword id="KW-0472">Membrane</keyword>
<keyword id="KW-0812">Transmembrane</keyword>
<keyword id="KW-1133">Transmembrane helix</keyword>
<keyword id="KW-0813">Transport</keyword>
<feature type="chain" id="PRO_0000296914" description="Putative manganese efflux pump MntP">
    <location>
        <begin position="1"/>
        <end position="182"/>
    </location>
</feature>
<feature type="transmembrane region" description="Helical" evidence="1">
    <location>
        <begin position="6"/>
        <end position="26"/>
    </location>
</feature>
<feature type="transmembrane region" description="Helical" evidence="1">
    <location>
        <begin position="37"/>
        <end position="57"/>
    </location>
</feature>
<feature type="transmembrane region" description="Helical" evidence="1">
    <location>
        <begin position="71"/>
        <end position="91"/>
    </location>
</feature>
<feature type="transmembrane region" description="Helical" evidence="1">
    <location>
        <begin position="101"/>
        <end position="121"/>
    </location>
</feature>
<feature type="transmembrane region" description="Helical" evidence="1">
    <location>
        <begin position="131"/>
        <end position="151"/>
    </location>
</feature>
<feature type="transmembrane region" description="Helical" evidence="1">
    <location>
        <begin position="162"/>
        <end position="182"/>
    </location>
</feature>
<evidence type="ECO:0000255" key="1">
    <source>
        <dbReference type="HAMAP-Rule" id="MF_01521"/>
    </source>
</evidence>
<sequence length="182" mass="19658">MTFEQLIPLIIMAFALGMDAFSVSLGMGMMALKIRQILYIGVTIGIFHIIMPFIGMVLGRFLSEQYGDIAHFAGAILLIGLGFYIVYSSILENEETRTAPIGISLFVFAFGVSIDSFSVGLSLGIYGAQTIITILLFGFVSMLLAWIGLLIGRHAKGMLGTYGEIVGGIILVGFGLYLLFPI</sequence>
<dbReference type="EMBL" id="CP000485">
    <property type="protein sequence ID" value="ABK88003.1"/>
    <property type="molecule type" value="Genomic_DNA"/>
</dbReference>
<dbReference type="RefSeq" id="WP_000142467.1">
    <property type="nucleotide sequence ID" value="NC_008600.1"/>
</dbReference>
<dbReference type="KEGG" id="btl:BALH_4823"/>
<dbReference type="HOGENOM" id="CLU_096410_1_0_9"/>
<dbReference type="GO" id="GO:0005886">
    <property type="term" value="C:plasma membrane"/>
    <property type="evidence" value="ECO:0007669"/>
    <property type="project" value="UniProtKB-SubCell"/>
</dbReference>
<dbReference type="GO" id="GO:0005384">
    <property type="term" value="F:manganese ion transmembrane transporter activity"/>
    <property type="evidence" value="ECO:0007669"/>
    <property type="project" value="UniProtKB-UniRule"/>
</dbReference>
<dbReference type="HAMAP" id="MF_01521">
    <property type="entry name" value="MntP_pump"/>
    <property type="match status" value="1"/>
</dbReference>
<dbReference type="InterPro" id="IPR003810">
    <property type="entry name" value="Mntp/YtaF"/>
</dbReference>
<dbReference type="InterPro" id="IPR022929">
    <property type="entry name" value="Put_MntP"/>
</dbReference>
<dbReference type="PANTHER" id="PTHR35529">
    <property type="entry name" value="MANGANESE EFFLUX PUMP MNTP-RELATED"/>
    <property type="match status" value="1"/>
</dbReference>
<dbReference type="PANTHER" id="PTHR35529:SF1">
    <property type="entry name" value="MANGANESE EFFLUX PUMP MNTP-RELATED"/>
    <property type="match status" value="1"/>
</dbReference>
<dbReference type="Pfam" id="PF02659">
    <property type="entry name" value="Mntp"/>
    <property type="match status" value="1"/>
</dbReference>
<reference key="1">
    <citation type="journal article" date="2007" name="J. Bacteriol.">
        <title>The complete genome sequence of Bacillus thuringiensis Al Hakam.</title>
        <authorList>
            <person name="Challacombe J.F."/>
            <person name="Altherr M.R."/>
            <person name="Xie G."/>
            <person name="Bhotika S.S."/>
            <person name="Brown N."/>
            <person name="Bruce D."/>
            <person name="Campbell C.S."/>
            <person name="Campbell M.L."/>
            <person name="Chen J."/>
            <person name="Chertkov O."/>
            <person name="Cleland C."/>
            <person name="Dimitrijevic M."/>
            <person name="Doggett N.A."/>
            <person name="Fawcett J.J."/>
            <person name="Glavina T."/>
            <person name="Goodwin L.A."/>
            <person name="Green L.D."/>
            <person name="Han C.S."/>
            <person name="Hill K.K."/>
            <person name="Hitchcock P."/>
            <person name="Jackson P.J."/>
            <person name="Keim P."/>
            <person name="Kewalramani A.R."/>
            <person name="Longmire J."/>
            <person name="Lucas S."/>
            <person name="Malfatti S."/>
            <person name="Martinez D."/>
            <person name="McMurry K."/>
            <person name="Meincke L.J."/>
            <person name="Misra M."/>
            <person name="Moseman B.L."/>
            <person name="Mundt M."/>
            <person name="Munk A.C."/>
            <person name="Okinaka R.T."/>
            <person name="Parson-Quintana B."/>
            <person name="Reilly L.P."/>
            <person name="Richardson P."/>
            <person name="Robinson D.L."/>
            <person name="Saunders E."/>
            <person name="Tapia R."/>
            <person name="Tesmer J.G."/>
            <person name="Thayer N."/>
            <person name="Thompson L.S."/>
            <person name="Tice H."/>
            <person name="Ticknor L.O."/>
            <person name="Wills P.L."/>
            <person name="Gilna P."/>
            <person name="Brettin T.S."/>
        </authorList>
    </citation>
    <scope>NUCLEOTIDE SEQUENCE [LARGE SCALE GENOMIC DNA]</scope>
    <source>
        <strain>Al Hakam</strain>
    </source>
</reference>
<organism>
    <name type="scientific">Bacillus thuringiensis (strain Al Hakam)</name>
    <dbReference type="NCBI Taxonomy" id="412694"/>
    <lineage>
        <taxon>Bacteria</taxon>
        <taxon>Bacillati</taxon>
        <taxon>Bacillota</taxon>
        <taxon>Bacilli</taxon>
        <taxon>Bacillales</taxon>
        <taxon>Bacillaceae</taxon>
        <taxon>Bacillus</taxon>
        <taxon>Bacillus cereus group</taxon>
    </lineage>
</organism>
<accession>A0RLB0</accession>
<proteinExistence type="inferred from homology"/>
<name>MNTP_BACAH</name>